<comment type="function">
    <text evidence="1">This enzyme scavenges exogenous and endogenous cytidine and 2'-deoxycytidine for UMP synthesis.</text>
</comment>
<comment type="catalytic activity">
    <reaction evidence="1">
        <text>cytidine + H2O + H(+) = uridine + NH4(+)</text>
        <dbReference type="Rhea" id="RHEA:16069"/>
        <dbReference type="ChEBI" id="CHEBI:15377"/>
        <dbReference type="ChEBI" id="CHEBI:15378"/>
        <dbReference type="ChEBI" id="CHEBI:16704"/>
        <dbReference type="ChEBI" id="CHEBI:17562"/>
        <dbReference type="ChEBI" id="CHEBI:28938"/>
        <dbReference type="EC" id="3.5.4.5"/>
    </reaction>
</comment>
<comment type="catalytic activity">
    <reaction evidence="1">
        <text>2'-deoxycytidine + H2O + H(+) = 2'-deoxyuridine + NH4(+)</text>
        <dbReference type="Rhea" id="RHEA:13433"/>
        <dbReference type="ChEBI" id="CHEBI:15377"/>
        <dbReference type="ChEBI" id="CHEBI:15378"/>
        <dbReference type="ChEBI" id="CHEBI:15698"/>
        <dbReference type="ChEBI" id="CHEBI:16450"/>
        <dbReference type="ChEBI" id="CHEBI:28938"/>
        <dbReference type="EC" id="3.5.4.5"/>
    </reaction>
</comment>
<comment type="cofactor">
    <cofactor evidence="1">
        <name>Zn(2+)</name>
        <dbReference type="ChEBI" id="CHEBI:29105"/>
    </cofactor>
    <text evidence="1">Binds 1 zinc ion.</text>
</comment>
<comment type="subunit">
    <text evidence="1">Homodimer.</text>
</comment>
<comment type="similarity">
    <text evidence="1">Belongs to the cytidine and deoxycytidylate deaminase family.</text>
</comment>
<keyword id="KW-0378">Hydrolase</keyword>
<keyword id="KW-0479">Metal-binding</keyword>
<keyword id="KW-0862">Zinc</keyword>
<organism>
    <name type="scientific">Shewanella baltica (strain OS185)</name>
    <dbReference type="NCBI Taxonomy" id="402882"/>
    <lineage>
        <taxon>Bacteria</taxon>
        <taxon>Pseudomonadati</taxon>
        <taxon>Pseudomonadota</taxon>
        <taxon>Gammaproteobacteria</taxon>
        <taxon>Alteromonadales</taxon>
        <taxon>Shewanellaceae</taxon>
        <taxon>Shewanella</taxon>
    </lineage>
</organism>
<protein>
    <recommendedName>
        <fullName evidence="1">Cytidine deaminase</fullName>
        <ecNumber evidence="1">3.5.4.5</ecNumber>
    </recommendedName>
    <alternativeName>
        <fullName evidence="1">Cytidine aminohydrolase</fullName>
        <shortName evidence="1">CDA</shortName>
    </alternativeName>
</protein>
<evidence type="ECO:0000255" key="1">
    <source>
        <dbReference type="HAMAP-Rule" id="MF_01558"/>
    </source>
</evidence>
<evidence type="ECO:0000255" key="2">
    <source>
        <dbReference type="PROSITE-ProRule" id="PRU01083"/>
    </source>
</evidence>
<proteinExistence type="inferred from homology"/>
<accession>A6WLY5</accession>
<feature type="chain" id="PRO_1000068961" description="Cytidine deaminase">
    <location>
        <begin position="1"/>
        <end position="296"/>
    </location>
</feature>
<feature type="domain" description="CMP/dCMP-type deaminase 1" evidence="2">
    <location>
        <begin position="47"/>
        <end position="167"/>
    </location>
</feature>
<feature type="domain" description="CMP/dCMP-type deaminase 2" evidence="2">
    <location>
        <begin position="186"/>
        <end position="296"/>
    </location>
</feature>
<feature type="active site" description="Proton donor" evidence="1">
    <location>
        <position position="103"/>
    </location>
</feature>
<feature type="binding site" evidence="1">
    <location>
        <begin position="88"/>
        <end position="90"/>
    </location>
    <ligand>
        <name>substrate</name>
    </ligand>
</feature>
<feature type="binding site" evidence="1">
    <location>
        <position position="101"/>
    </location>
    <ligand>
        <name>Zn(2+)</name>
        <dbReference type="ChEBI" id="CHEBI:29105"/>
        <note>catalytic</note>
    </ligand>
</feature>
<feature type="binding site" evidence="1">
    <location>
        <position position="128"/>
    </location>
    <ligand>
        <name>Zn(2+)</name>
        <dbReference type="ChEBI" id="CHEBI:29105"/>
        <note>catalytic</note>
    </ligand>
</feature>
<feature type="binding site" evidence="1">
    <location>
        <position position="131"/>
    </location>
    <ligand>
        <name>Zn(2+)</name>
        <dbReference type="ChEBI" id="CHEBI:29105"/>
        <note>catalytic</note>
    </ligand>
</feature>
<sequence>MQDRFIRSITQLPTPLADALIPMLHQNFAGHLDAQQLATLTSASKMTEAEVLLALLPIAAALAKPPISEFYVGAIAKGKSGDIYMGANLELPGEALFHSVHAEQSAISHAWLSGESQIVDIIVNASPCGHCRQFMNELVEGSKISIHLPAQESHPLAYYLPYAFGPKDLNVTSPLMAKQQTEFALDSADPMIIEGLDHAGLSYAPYTQSFAAVVLETRDGATYCGRYAENAAFNPSMLPMQMALSNLVRHNREFSDISRAVLIESSQGKISLVGATMDALHTVAAIELEHIVIDPV</sequence>
<gene>
    <name evidence="1" type="primary">cdd</name>
    <name type="ordered locus">Shew185_1679</name>
</gene>
<reference key="1">
    <citation type="submission" date="2007-07" db="EMBL/GenBank/DDBJ databases">
        <title>Complete sequence of chromosome of Shewanella baltica OS185.</title>
        <authorList>
            <consortium name="US DOE Joint Genome Institute"/>
            <person name="Copeland A."/>
            <person name="Lucas S."/>
            <person name="Lapidus A."/>
            <person name="Barry K."/>
            <person name="Glavina del Rio T."/>
            <person name="Dalin E."/>
            <person name="Tice H."/>
            <person name="Pitluck S."/>
            <person name="Sims D."/>
            <person name="Brettin T."/>
            <person name="Bruce D."/>
            <person name="Detter J.C."/>
            <person name="Han C."/>
            <person name="Schmutz J."/>
            <person name="Larimer F."/>
            <person name="Land M."/>
            <person name="Hauser L."/>
            <person name="Kyrpides N."/>
            <person name="Mikhailova N."/>
            <person name="Brettar I."/>
            <person name="Rodrigues J."/>
            <person name="Konstantinidis K."/>
            <person name="Tiedje J."/>
            <person name="Richardson P."/>
        </authorList>
    </citation>
    <scope>NUCLEOTIDE SEQUENCE [LARGE SCALE GENOMIC DNA]</scope>
    <source>
        <strain>OS185</strain>
    </source>
</reference>
<name>CDD_SHEB8</name>
<dbReference type="EC" id="3.5.4.5" evidence="1"/>
<dbReference type="EMBL" id="CP000753">
    <property type="protein sequence ID" value="ABS07824.1"/>
    <property type="molecule type" value="Genomic_DNA"/>
</dbReference>
<dbReference type="RefSeq" id="WP_006087443.1">
    <property type="nucleotide sequence ID" value="NC_009665.1"/>
</dbReference>
<dbReference type="SMR" id="A6WLY5"/>
<dbReference type="GeneID" id="11771940"/>
<dbReference type="KEGG" id="sbm:Shew185_1679"/>
<dbReference type="HOGENOM" id="CLU_052424_0_0_6"/>
<dbReference type="GO" id="GO:0005829">
    <property type="term" value="C:cytosol"/>
    <property type="evidence" value="ECO:0007669"/>
    <property type="project" value="TreeGrafter"/>
</dbReference>
<dbReference type="GO" id="GO:0004126">
    <property type="term" value="F:cytidine deaminase activity"/>
    <property type="evidence" value="ECO:0007669"/>
    <property type="project" value="UniProtKB-UniRule"/>
</dbReference>
<dbReference type="GO" id="GO:0042802">
    <property type="term" value="F:identical protein binding"/>
    <property type="evidence" value="ECO:0007669"/>
    <property type="project" value="UniProtKB-ARBA"/>
</dbReference>
<dbReference type="GO" id="GO:0008270">
    <property type="term" value="F:zinc ion binding"/>
    <property type="evidence" value="ECO:0007669"/>
    <property type="project" value="UniProtKB-UniRule"/>
</dbReference>
<dbReference type="GO" id="GO:0009972">
    <property type="term" value="P:cytidine deamination"/>
    <property type="evidence" value="ECO:0007669"/>
    <property type="project" value="InterPro"/>
</dbReference>
<dbReference type="CDD" id="cd01283">
    <property type="entry name" value="cytidine_deaminase"/>
    <property type="match status" value="1"/>
</dbReference>
<dbReference type="FunFam" id="3.40.140.10:FF:000007">
    <property type="entry name" value="Cytidine deaminase"/>
    <property type="match status" value="1"/>
</dbReference>
<dbReference type="Gene3D" id="3.40.140.10">
    <property type="entry name" value="Cytidine Deaminase, domain 2"/>
    <property type="match status" value="2"/>
</dbReference>
<dbReference type="HAMAP" id="MF_01558">
    <property type="entry name" value="Cyt_deam"/>
    <property type="match status" value="1"/>
</dbReference>
<dbReference type="InterPro" id="IPR016192">
    <property type="entry name" value="APOBEC/CMP_deaminase_Zn-bd"/>
</dbReference>
<dbReference type="InterPro" id="IPR002125">
    <property type="entry name" value="CMP_dCMP_dom"/>
</dbReference>
<dbReference type="InterPro" id="IPR013171">
    <property type="entry name" value="Cyd/dCyd_deaminase_Zn-bd"/>
</dbReference>
<dbReference type="InterPro" id="IPR050202">
    <property type="entry name" value="Cyt/Deoxycyt_deaminase"/>
</dbReference>
<dbReference type="InterPro" id="IPR016193">
    <property type="entry name" value="Cytidine_deaminase-like"/>
</dbReference>
<dbReference type="InterPro" id="IPR020797">
    <property type="entry name" value="Cytidine_deaminase_bacteria"/>
</dbReference>
<dbReference type="NCBIfam" id="NF006537">
    <property type="entry name" value="PRK09027.1"/>
    <property type="match status" value="1"/>
</dbReference>
<dbReference type="PANTHER" id="PTHR11644">
    <property type="entry name" value="CYTIDINE DEAMINASE"/>
    <property type="match status" value="1"/>
</dbReference>
<dbReference type="PANTHER" id="PTHR11644:SF2">
    <property type="entry name" value="CYTIDINE DEAMINASE"/>
    <property type="match status" value="1"/>
</dbReference>
<dbReference type="Pfam" id="PF00383">
    <property type="entry name" value="dCMP_cyt_deam_1"/>
    <property type="match status" value="1"/>
</dbReference>
<dbReference type="Pfam" id="PF08211">
    <property type="entry name" value="dCMP_cyt_deam_2"/>
    <property type="match status" value="1"/>
</dbReference>
<dbReference type="PIRSF" id="PIRSF006334">
    <property type="entry name" value="Cdd_plus_pseudo"/>
    <property type="match status" value="1"/>
</dbReference>
<dbReference type="SUPFAM" id="SSF53927">
    <property type="entry name" value="Cytidine deaminase-like"/>
    <property type="match status" value="2"/>
</dbReference>
<dbReference type="PROSITE" id="PS00903">
    <property type="entry name" value="CYT_DCMP_DEAMINASES_1"/>
    <property type="match status" value="1"/>
</dbReference>
<dbReference type="PROSITE" id="PS51747">
    <property type="entry name" value="CYT_DCMP_DEAMINASES_2"/>
    <property type="match status" value="2"/>
</dbReference>